<keyword id="KW-0067">ATP-binding</keyword>
<keyword id="KW-0235">DNA replication</keyword>
<keyword id="KW-0547">Nucleotide-binding</keyword>
<keyword id="KW-1185">Reference proteome</keyword>
<feature type="chain" id="PRO_0000135947" description="Replication factor C large subunit">
    <location>
        <begin position="1"/>
        <end position="479"/>
    </location>
</feature>
<feature type="region of interest" description="Disordered" evidence="2">
    <location>
        <begin position="435"/>
        <end position="479"/>
    </location>
</feature>
<feature type="compositionally biased region" description="Basic and acidic residues" evidence="2">
    <location>
        <begin position="435"/>
        <end position="461"/>
    </location>
</feature>
<feature type="binding site" evidence="1">
    <location>
        <begin position="56"/>
        <end position="63"/>
    </location>
    <ligand>
        <name>ATP</name>
        <dbReference type="ChEBI" id="CHEBI:30616"/>
    </ligand>
</feature>
<gene>
    <name evidence="1" type="primary">rfcL</name>
    <name type="ordered locus">APE_1524.1</name>
</gene>
<accession>Q9YBS5</accession>
<sequence length="479" mass="54806">MPIVARSSRVPWVIKYRPKRVEDVVNQDQAKKILVPWFKAWLEGRKPDKRAALLYGPPGVGKTSLVEAIASEFNLEMIELNASDYRRRSDIERIVGAASRKRSMFKRGVVILLDEVDGINPREDAGGIEALLSVIKTTENPIVMTANDPWKDFLRPLREVSLMVEFRPLTLTHIVAVLQRICEAERIECEREALRYIAERSEGDLRSAINDLQAVAEGYGRVTLTLAREIVRGREKSIDIWRTLNQVFYKPRQAWMARKAVSQSEKDYEELIAWINDNIPRKYGEPSDLFRAFDALARATVFLGRAKFGGNWELLSYVFDLMGPGVAYARMEGEVLKTRYSYPEKIRMMAQLRGVRETREKLAEVLAKRLLMSRRAVKTEVLPILHYIFRSSRDPTKPAMIALEYGLTEKMVELLAGQRKSEILKAMATVKKARLGEKPLEPQEAKARRRGEKASRDEGRKAGKRERKGVGLDFFLGEQ</sequence>
<name>RFCL_AERPE</name>
<evidence type="ECO:0000255" key="1">
    <source>
        <dbReference type="HAMAP-Rule" id="MF_01508"/>
    </source>
</evidence>
<evidence type="ECO:0000256" key="2">
    <source>
        <dbReference type="SAM" id="MobiDB-lite"/>
    </source>
</evidence>
<comment type="function">
    <text evidence="1">Part of the RFC clamp loader complex which loads the PCNA sliding clamp onto DNA.</text>
</comment>
<comment type="subunit">
    <text evidence="1">Heteromultimer composed of small subunits (RfcS) and large subunits (RfcL).</text>
</comment>
<comment type="similarity">
    <text evidence="1">Belongs to the activator 1 small subunits family. RfcL subfamily.</text>
</comment>
<organism>
    <name type="scientific">Aeropyrum pernix (strain ATCC 700893 / DSM 11879 / JCM 9820 / NBRC 100138 / K1)</name>
    <dbReference type="NCBI Taxonomy" id="272557"/>
    <lineage>
        <taxon>Archaea</taxon>
        <taxon>Thermoproteota</taxon>
        <taxon>Thermoprotei</taxon>
        <taxon>Desulfurococcales</taxon>
        <taxon>Desulfurococcaceae</taxon>
        <taxon>Aeropyrum</taxon>
    </lineage>
</organism>
<protein>
    <recommendedName>
        <fullName evidence="1">Replication factor C large subunit</fullName>
        <shortName evidence="1">RFC large subunit</shortName>
    </recommendedName>
    <alternativeName>
        <fullName evidence="1">Clamp loader large subunit</fullName>
    </alternativeName>
</protein>
<dbReference type="EMBL" id="BA000002">
    <property type="protein sequence ID" value="BAA80523.2"/>
    <property type="molecule type" value="Genomic_DNA"/>
</dbReference>
<dbReference type="PIR" id="E72633">
    <property type="entry name" value="E72633"/>
</dbReference>
<dbReference type="RefSeq" id="WP_010866424.1">
    <property type="nucleotide sequence ID" value="NC_000854.2"/>
</dbReference>
<dbReference type="SMR" id="Q9YBS5"/>
<dbReference type="STRING" id="272557.APE_1524.1"/>
<dbReference type="EnsemblBacteria" id="BAA80523">
    <property type="protein sequence ID" value="BAA80523"/>
    <property type="gene ID" value="APE_1524.1"/>
</dbReference>
<dbReference type="GeneID" id="1446070"/>
<dbReference type="KEGG" id="ape:APE_1524.1"/>
<dbReference type="PATRIC" id="fig|272557.25.peg.1027"/>
<dbReference type="eggNOG" id="arCOG00470">
    <property type="taxonomic scope" value="Archaea"/>
</dbReference>
<dbReference type="Proteomes" id="UP000002518">
    <property type="component" value="Chromosome"/>
</dbReference>
<dbReference type="GO" id="GO:0005524">
    <property type="term" value="F:ATP binding"/>
    <property type="evidence" value="ECO:0007669"/>
    <property type="project" value="UniProtKB-UniRule"/>
</dbReference>
<dbReference type="GO" id="GO:0016887">
    <property type="term" value="F:ATP hydrolysis activity"/>
    <property type="evidence" value="ECO:0007669"/>
    <property type="project" value="InterPro"/>
</dbReference>
<dbReference type="GO" id="GO:0003689">
    <property type="term" value="F:DNA clamp loader activity"/>
    <property type="evidence" value="ECO:0007669"/>
    <property type="project" value="UniProtKB-UniRule"/>
</dbReference>
<dbReference type="GO" id="GO:0006260">
    <property type="term" value="P:DNA replication"/>
    <property type="evidence" value="ECO:0007669"/>
    <property type="project" value="UniProtKB-UniRule"/>
</dbReference>
<dbReference type="CDD" id="cd00009">
    <property type="entry name" value="AAA"/>
    <property type="match status" value="1"/>
</dbReference>
<dbReference type="CDD" id="cd18140">
    <property type="entry name" value="HLD_clamp_RFC"/>
    <property type="match status" value="1"/>
</dbReference>
<dbReference type="Gene3D" id="1.10.8.60">
    <property type="match status" value="1"/>
</dbReference>
<dbReference type="Gene3D" id="3.40.50.300">
    <property type="entry name" value="P-loop containing nucleotide triphosphate hydrolases"/>
    <property type="match status" value="1"/>
</dbReference>
<dbReference type="HAMAP" id="MF_01508">
    <property type="entry name" value="RfcL"/>
    <property type="match status" value="1"/>
</dbReference>
<dbReference type="InterPro" id="IPR003593">
    <property type="entry name" value="AAA+_ATPase"/>
</dbReference>
<dbReference type="InterPro" id="IPR003959">
    <property type="entry name" value="ATPase_AAA_core"/>
</dbReference>
<dbReference type="InterPro" id="IPR027417">
    <property type="entry name" value="P-loop_NTPase"/>
</dbReference>
<dbReference type="InterPro" id="IPR023935">
    <property type="entry name" value="Rep_factor-C_lsu"/>
</dbReference>
<dbReference type="InterPro" id="IPR047854">
    <property type="entry name" value="RFC_lid"/>
</dbReference>
<dbReference type="NCBIfam" id="NF003229">
    <property type="entry name" value="PRK04195.1-5"/>
    <property type="match status" value="1"/>
</dbReference>
<dbReference type="PANTHER" id="PTHR23389">
    <property type="entry name" value="CHROMOSOME TRANSMISSION FIDELITY FACTOR 18"/>
    <property type="match status" value="1"/>
</dbReference>
<dbReference type="PANTHER" id="PTHR23389:SF6">
    <property type="entry name" value="REPLICATION FACTOR C SUBUNIT 1"/>
    <property type="match status" value="1"/>
</dbReference>
<dbReference type="Pfam" id="PF00004">
    <property type="entry name" value="AAA"/>
    <property type="match status" value="1"/>
</dbReference>
<dbReference type="Pfam" id="PF21960">
    <property type="entry name" value="RCF1-5-like_lid"/>
    <property type="match status" value="1"/>
</dbReference>
<dbReference type="SMART" id="SM00382">
    <property type="entry name" value="AAA"/>
    <property type="match status" value="1"/>
</dbReference>
<dbReference type="SUPFAM" id="SSF52540">
    <property type="entry name" value="P-loop containing nucleoside triphosphate hydrolases"/>
    <property type="match status" value="1"/>
</dbReference>
<proteinExistence type="inferred from homology"/>
<reference key="1">
    <citation type="journal article" date="1999" name="DNA Res.">
        <title>Complete genome sequence of an aerobic hyper-thermophilic crenarchaeon, Aeropyrum pernix K1.</title>
        <authorList>
            <person name="Kawarabayasi Y."/>
            <person name="Hino Y."/>
            <person name="Horikawa H."/>
            <person name="Yamazaki S."/>
            <person name="Haikawa Y."/>
            <person name="Jin-no K."/>
            <person name="Takahashi M."/>
            <person name="Sekine M."/>
            <person name="Baba S."/>
            <person name="Ankai A."/>
            <person name="Kosugi H."/>
            <person name="Hosoyama A."/>
            <person name="Fukui S."/>
            <person name="Nagai Y."/>
            <person name="Nishijima K."/>
            <person name="Nakazawa H."/>
            <person name="Takamiya M."/>
            <person name="Masuda S."/>
            <person name="Funahashi T."/>
            <person name="Tanaka T."/>
            <person name="Kudoh Y."/>
            <person name="Yamazaki J."/>
            <person name="Kushida N."/>
            <person name="Oguchi A."/>
            <person name="Aoki K."/>
            <person name="Kubota K."/>
            <person name="Nakamura Y."/>
            <person name="Nomura N."/>
            <person name="Sako Y."/>
            <person name="Kikuchi H."/>
        </authorList>
    </citation>
    <scope>NUCLEOTIDE SEQUENCE [LARGE SCALE GENOMIC DNA]</scope>
    <source>
        <strain>ATCC 700893 / DSM 11879 / JCM 9820 / NBRC 100138 / K1</strain>
    </source>
</reference>